<name>Y1609_MARN8</name>
<dbReference type="EMBL" id="CP000514">
    <property type="protein sequence ID" value="ABM18693.1"/>
    <property type="molecule type" value="Genomic_DNA"/>
</dbReference>
<dbReference type="RefSeq" id="WP_011785094.1">
    <property type="nucleotide sequence ID" value="NC_008740.1"/>
</dbReference>
<dbReference type="SMR" id="A1U124"/>
<dbReference type="STRING" id="351348.Maqu_1609"/>
<dbReference type="KEGG" id="maq:Maqu_1609"/>
<dbReference type="eggNOG" id="COG3100">
    <property type="taxonomic scope" value="Bacteria"/>
</dbReference>
<dbReference type="HOGENOM" id="CLU_155118_2_0_6"/>
<dbReference type="OrthoDB" id="7062382at2"/>
<dbReference type="Proteomes" id="UP000000998">
    <property type="component" value="Chromosome"/>
</dbReference>
<dbReference type="Gene3D" id="3.10.510.20">
    <property type="entry name" value="YcgL domain"/>
    <property type="match status" value="1"/>
</dbReference>
<dbReference type="HAMAP" id="MF_01866">
    <property type="entry name" value="UPF0745"/>
    <property type="match status" value="1"/>
</dbReference>
<dbReference type="InterPro" id="IPR038068">
    <property type="entry name" value="YcgL-like_sf"/>
</dbReference>
<dbReference type="InterPro" id="IPR027354">
    <property type="entry name" value="YcgL_dom"/>
</dbReference>
<dbReference type="PANTHER" id="PTHR38109">
    <property type="entry name" value="PROTEIN YCGL"/>
    <property type="match status" value="1"/>
</dbReference>
<dbReference type="PANTHER" id="PTHR38109:SF1">
    <property type="entry name" value="PROTEIN YCGL"/>
    <property type="match status" value="1"/>
</dbReference>
<dbReference type="Pfam" id="PF05166">
    <property type="entry name" value="YcgL"/>
    <property type="match status" value="1"/>
</dbReference>
<dbReference type="SUPFAM" id="SSF160191">
    <property type="entry name" value="YcgL-like"/>
    <property type="match status" value="1"/>
</dbReference>
<dbReference type="PROSITE" id="PS51648">
    <property type="entry name" value="YCGL"/>
    <property type="match status" value="1"/>
</dbReference>
<gene>
    <name type="ordered locus">Maqu_1609</name>
</gene>
<evidence type="ECO:0000255" key="1">
    <source>
        <dbReference type="HAMAP-Rule" id="MF_01866"/>
    </source>
</evidence>
<protein>
    <recommendedName>
        <fullName evidence="1">YcgL domain-containing protein Maqu_1609</fullName>
    </recommendedName>
</protein>
<accession>A1U124</accession>
<organism>
    <name type="scientific">Marinobacter nauticus (strain ATCC 700491 / DSM 11845 / VT8)</name>
    <name type="common">Marinobacter aquaeolei</name>
    <dbReference type="NCBI Taxonomy" id="351348"/>
    <lineage>
        <taxon>Bacteria</taxon>
        <taxon>Pseudomonadati</taxon>
        <taxon>Pseudomonadota</taxon>
        <taxon>Gammaproteobacteria</taxon>
        <taxon>Pseudomonadales</taxon>
        <taxon>Marinobacteraceae</taxon>
        <taxon>Marinobacter</taxon>
    </lineage>
</organism>
<reference key="1">
    <citation type="journal article" date="2011" name="Appl. Environ. Microbiol.">
        <title>Genomic potential of Marinobacter aquaeolei, a biogeochemical 'opportunitroph'.</title>
        <authorList>
            <person name="Singer E."/>
            <person name="Webb E.A."/>
            <person name="Nelson W.C."/>
            <person name="Heidelberg J.F."/>
            <person name="Ivanova N."/>
            <person name="Pati A."/>
            <person name="Edwards K.J."/>
        </authorList>
    </citation>
    <scope>NUCLEOTIDE SEQUENCE [LARGE SCALE GENOMIC DNA]</scope>
    <source>
        <strain>ATCC 700491 / DSM 11845 / VT8</strain>
    </source>
</reference>
<sequence length="97" mass="11435">MTEREFVSVFRSSKKGDTYLFVRRGQKWDDLPEALRGIFGSPIHSMDLLLTPDKKLARTTGKEVLAAIEEKDFFLQMPEEQDTYIVDFKRKIEQHRK</sequence>
<feature type="chain" id="PRO_0000375319" description="YcgL domain-containing protein Maqu_1609">
    <location>
        <begin position="1"/>
        <end position="97"/>
    </location>
</feature>
<feature type="domain" description="YcgL" evidence="1">
    <location>
        <begin position="5"/>
        <end position="89"/>
    </location>
</feature>
<proteinExistence type="inferred from homology"/>